<protein>
    <recommendedName>
        <fullName>Receptor expression-enhancing protein 6</fullName>
    </recommendedName>
</protein>
<gene>
    <name evidence="7" type="primary">reep6</name>
    <name type="ORF">zgc:101529</name>
</gene>
<name>REEP6_DANRE</name>
<evidence type="ECO:0000250" key="1">
    <source>
        <dbReference type="UniProtKB" id="Q9JM62"/>
    </source>
</evidence>
<evidence type="ECO:0000255" key="2"/>
<evidence type="ECO:0000256" key="3">
    <source>
        <dbReference type="SAM" id="MobiDB-lite"/>
    </source>
</evidence>
<evidence type="ECO:0000269" key="4">
    <source>
    </source>
</evidence>
<evidence type="ECO:0000305" key="5"/>
<evidence type="ECO:0000312" key="6">
    <source>
        <dbReference type="EMBL" id="AAH81377.1"/>
    </source>
</evidence>
<evidence type="ECO:0000312" key="7">
    <source>
        <dbReference type="ZFIN" id="ZDB-GENE-040912-98"/>
    </source>
</evidence>
<dbReference type="EMBL" id="CR678040">
    <property type="status" value="NOT_ANNOTATED_CDS"/>
    <property type="molecule type" value="Genomic_DNA"/>
</dbReference>
<dbReference type="EMBL" id="FP016232">
    <property type="status" value="NOT_ANNOTATED_CDS"/>
    <property type="molecule type" value="Genomic_DNA"/>
</dbReference>
<dbReference type="EMBL" id="BC081377">
    <property type="protein sequence ID" value="AAH81377.1"/>
    <property type="molecule type" value="mRNA"/>
</dbReference>
<dbReference type="EMBL" id="BC165140">
    <property type="protein sequence ID" value="AAI65140.1"/>
    <property type="molecule type" value="mRNA"/>
</dbReference>
<dbReference type="RefSeq" id="NP_001004656.1">
    <property type="nucleotide sequence ID" value="NM_001004656.2"/>
</dbReference>
<dbReference type="SMR" id="Q66IF1"/>
<dbReference type="FunCoup" id="Q66IF1">
    <property type="interactions" value="1946"/>
</dbReference>
<dbReference type="STRING" id="7955.ENSDARP00000107799"/>
<dbReference type="PaxDb" id="7955-ENSDARP00000063075"/>
<dbReference type="Ensembl" id="ENSDART00000130400">
    <property type="protein sequence ID" value="ENSDARP00000107799"/>
    <property type="gene ID" value="ENSDARG00000087349"/>
</dbReference>
<dbReference type="Ensembl" id="ENSDART00000153470">
    <property type="protein sequence ID" value="ENSDARP00000129289"/>
    <property type="gene ID" value="ENSDARG00000087349"/>
</dbReference>
<dbReference type="Ensembl" id="ENSDART00000155427">
    <property type="protein sequence ID" value="ENSDARP00000127823"/>
    <property type="gene ID" value="ENSDARG00000087349"/>
</dbReference>
<dbReference type="GeneID" id="447918"/>
<dbReference type="KEGG" id="dre:447918"/>
<dbReference type="AGR" id="ZFIN:ZDB-GENE-040912-98"/>
<dbReference type="CTD" id="92840"/>
<dbReference type="ZFIN" id="ZDB-GENE-040912-98">
    <property type="gene designation" value="reep6"/>
</dbReference>
<dbReference type="eggNOG" id="KOG1725">
    <property type="taxonomic scope" value="Eukaryota"/>
</dbReference>
<dbReference type="InParanoid" id="Q66IF1"/>
<dbReference type="OMA" id="AWNGSQM"/>
<dbReference type="OrthoDB" id="10009287at2759"/>
<dbReference type="PhylomeDB" id="Q66IF1"/>
<dbReference type="TreeFam" id="TF314913"/>
<dbReference type="PRO" id="PR:Q66IF1"/>
<dbReference type="Proteomes" id="UP000000437">
    <property type="component" value="Chromosome 11"/>
</dbReference>
<dbReference type="Bgee" id="ENSDARG00000087349">
    <property type="expression patterns" value="Expressed in retina and 6 other cell types or tissues"/>
</dbReference>
<dbReference type="ExpressionAtlas" id="Q66IF1">
    <property type="expression patterns" value="baseline and differential"/>
</dbReference>
<dbReference type="GO" id="GO:0030665">
    <property type="term" value="C:clathrin-coated vesicle membrane"/>
    <property type="evidence" value="ECO:0007669"/>
    <property type="project" value="UniProtKB-SubCell"/>
</dbReference>
<dbReference type="GO" id="GO:0005789">
    <property type="term" value="C:endoplasmic reticulum membrane"/>
    <property type="evidence" value="ECO:0007669"/>
    <property type="project" value="UniProtKB-SubCell"/>
</dbReference>
<dbReference type="GO" id="GO:0060059">
    <property type="term" value="P:embryonic retina morphogenesis in camera-type eye"/>
    <property type="evidence" value="ECO:0000315"/>
    <property type="project" value="UniProtKB"/>
</dbReference>
<dbReference type="GO" id="GO:0010842">
    <property type="term" value="P:retina layer formation"/>
    <property type="evidence" value="ECO:0000315"/>
    <property type="project" value="UniProtKB"/>
</dbReference>
<dbReference type="InterPro" id="IPR004345">
    <property type="entry name" value="TB2_DP1_HVA22"/>
</dbReference>
<dbReference type="PANTHER" id="PTHR12300">
    <property type="entry name" value="HVA22-LIKE PROTEINS"/>
    <property type="match status" value="1"/>
</dbReference>
<dbReference type="PANTHER" id="PTHR12300:SF133">
    <property type="entry name" value="RECEPTOR EXPRESSION-ENHANCING PROTEIN 6"/>
    <property type="match status" value="1"/>
</dbReference>
<dbReference type="Pfam" id="PF03134">
    <property type="entry name" value="TB2_DP1_HVA22"/>
    <property type="match status" value="1"/>
</dbReference>
<sequence length="208" mass="23536">MFAIFTKIKDRVEAFLNEKNIVTDCLNKIEEKTGIKKRYLAYGAAGVTGAFLLLGYGASLICNLIGFVYPAYFSIKAIESPGKEDDTQWLTYWVIYGFFSVGEFFSDIFLHWFPFYYVCKCLFLLWCMAPVSWNGSQVLYRHVVRPFFLKHEAAVDGMVSNISVKAMSAAENVTREVLHTLVRNRTVGPAESEPRSLPSSAHTEPTVD</sequence>
<feature type="chain" id="PRO_0000430020" description="Receptor expression-enhancing protein 6">
    <location>
        <begin position="1"/>
        <end position="208"/>
    </location>
</feature>
<feature type="transmembrane region" description="Helical" evidence="2">
    <location>
        <begin position="49"/>
        <end position="69"/>
    </location>
</feature>
<feature type="transmembrane region" description="Helical" evidence="2">
    <location>
        <begin position="93"/>
        <end position="113"/>
    </location>
</feature>
<feature type="transmembrane region" description="Helical" evidence="2">
    <location>
        <begin position="115"/>
        <end position="135"/>
    </location>
</feature>
<feature type="region of interest" description="Disordered" evidence="3">
    <location>
        <begin position="187"/>
        <end position="208"/>
    </location>
</feature>
<feature type="compositionally biased region" description="Polar residues" evidence="3">
    <location>
        <begin position="197"/>
        <end position="208"/>
    </location>
</feature>
<keyword id="KW-0968">Cytoplasmic vesicle</keyword>
<keyword id="KW-0217">Developmental protein</keyword>
<keyword id="KW-0256">Endoplasmic reticulum</keyword>
<keyword id="KW-0472">Membrane</keyword>
<keyword id="KW-1185">Reference proteome</keyword>
<keyword id="KW-0812">Transmembrane</keyword>
<keyword id="KW-1133">Transmembrane helix</keyword>
<accession>Q66IF1</accession>
<reference key="1">
    <citation type="journal article" date="2013" name="Nature">
        <title>The zebrafish reference genome sequence and its relationship to the human genome.</title>
        <authorList>
            <person name="Howe K."/>
            <person name="Clark M.D."/>
            <person name="Torroja C.F."/>
            <person name="Torrance J."/>
            <person name="Berthelot C."/>
            <person name="Muffato M."/>
            <person name="Collins J.E."/>
            <person name="Humphray S."/>
            <person name="McLaren K."/>
            <person name="Matthews L."/>
            <person name="McLaren S."/>
            <person name="Sealy I."/>
            <person name="Caccamo M."/>
            <person name="Churcher C."/>
            <person name="Scott C."/>
            <person name="Barrett J.C."/>
            <person name="Koch R."/>
            <person name="Rauch G.J."/>
            <person name="White S."/>
            <person name="Chow W."/>
            <person name="Kilian B."/>
            <person name="Quintais L.T."/>
            <person name="Guerra-Assuncao J.A."/>
            <person name="Zhou Y."/>
            <person name="Gu Y."/>
            <person name="Yen J."/>
            <person name="Vogel J.H."/>
            <person name="Eyre T."/>
            <person name="Redmond S."/>
            <person name="Banerjee R."/>
            <person name="Chi J."/>
            <person name="Fu B."/>
            <person name="Langley E."/>
            <person name="Maguire S.F."/>
            <person name="Laird G.K."/>
            <person name="Lloyd D."/>
            <person name="Kenyon E."/>
            <person name="Donaldson S."/>
            <person name="Sehra H."/>
            <person name="Almeida-King J."/>
            <person name="Loveland J."/>
            <person name="Trevanion S."/>
            <person name="Jones M."/>
            <person name="Quail M."/>
            <person name="Willey D."/>
            <person name="Hunt A."/>
            <person name="Burton J."/>
            <person name="Sims S."/>
            <person name="McLay K."/>
            <person name="Plumb B."/>
            <person name="Davis J."/>
            <person name="Clee C."/>
            <person name="Oliver K."/>
            <person name="Clark R."/>
            <person name="Riddle C."/>
            <person name="Elliot D."/>
            <person name="Threadgold G."/>
            <person name="Harden G."/>
            <person name="Ware D."/>
            <person name="Begum S."/>
            <person name="Mortimore B."/>
            <person name="Kerry G."/>
            <person name="Heath P."/>
            <person name="Phillimore B."/>
            <person name="Tracey A."/>
            <person name="Corby N."/>
            <person name="Dunn M."/>
            <person name="Johnson C."/>
            <person name="Wood J."/>
            <person name="Clark S."/>
            <person name="Pelan S."/>
            <person name="Griffiths G."/>
            <person name="Smith M."/>
            <person name="Glithero R."/>
            <person name="Howden P."/>
            <person name="Barker N."/>
            <person name="Lloyd C."/>
            <person name="Stevens C."/>
            <person name="Harley J."/>
            <person name="Holt K."/>
            <person name="Panagiotidis G."/>
            <person name="Lovell J."/>
            <person name="Beasley H."/>
            <person name="Henderson C."/>
            <person name="Gordon D."/>
            <person name="Auger K."/>
            <person name="Wright D."/>
            <person name="Collins J."/>
            <person name="Raisen C."/>
            <person name="Dyer L."/>
            <person name="Leung K."/>
            <person name="Robertson L."/>
            <person name="Ambridge K."/>
            <person name="Leongamornlert D."/>
            <person name="McGuire S."/>
            <person name="Gilderthorp R."/>
            <person name="Griffiths C."/>
            <person name="Manthravadi D."/>
            <person name="Nichol S."/>
            <person name="Barker G."/>
            <person name="Whitehead S."/>
            <person name="Kay M."/>
            <person name="Brown J."/>
            <person name="Murnane C."/>
            <person name="Gray E."/>
            <person name="Humphries M."/>
            <person name="Sycamore N."/>
            <person name="Barker D."/>
            <person name="Saunders D."/>
            <person name="Wallis J."/>
            <person name="Babbage A."/>
            <person name="Hammond S."/>
            <person name="Mashreghi-Mohammadi M."/>
            <person name="Barr L."/>
            <person name="Martin S."/>
            <person name="Wray P."/>
            <person name="Ellington A."/>
            <person name="Matthews N."/>
            <person name="Ellwood M."/>
            <person name="Woodmansey R."/>
            <person name="Clark G."/>
            <person name="Cooper J."/>
            <person name="Tromans A."/>
            <person name="Grafham D."/>
            <person name="Skuce C."/>
            <person name="Pandian R."/>
            <person name="Andrews R."/>
            <person name="Harrison E."/>
            <person name="Kimberley A."/>
            <person name="Garnett J."/>
            <person name="Fosker N."/>
            <person name="Hall R."/>
            <person name="Garner P."/>
            <person name="Kelly D."/>
            <person name="Bird C."/>
            <person name="Palmer S."/>
            <person name="Gehring I."/>
            <person name="Berger A."/>
            <person name="Dooley C.M."/>
            <person name="Ersan-Urun Z."/>
            <person name="Eser C."/>
            <person name="Geiger H."/>
            <person name="Geisler M."/>
            <person name="Karotki L."/>
            <person name="Kirn A."/>
            <person name="Konantz J."/>
            <person name="Konantz M."/>
            <person name="Oberlander M."/>
            <person name="Rudolph-Geiger S."/>
            <person name="Teucke M."/>
            <person name="Lanz C."/>
            <person name="Raddatz G."/>
            <person name="Osoegawa K."/>
            <person name="Zhu B."/>
            <person name="Rapp A."/>
            <person name="Widaa S."/>
            <person name="Langford C."/>
            <person name="Yang F."/>
            <person name="Schuster S.C."/>
            <person name="Carter N.P."/>
            <person name="Harrow J."/>
            <person name="Ning Z."/>
            <person name="Herrero J."/>
            <person name="Searle S.M."/>
            <person name="Enright A."/>
            <person name="Geisler R."/>
            <person name="Plasterk R.H."/>
            <person name="Lee C."/>
            <person name="Westerfield M."/>
            <person name="de Jong P.J."/>
            <person name="Zon L.I."/>
            <person name="Postlethwait J.H."/>
            <person name="Nusslein-Volhard C."/>
            <person name="Hubbard T.J."/>
            <person name="Roest Crollius H."/>
            <person name="Rogers J."/>
            <person name="Stemple D.L."/>
        </authorList>
    </citation>
    <scope>NUCLEOTIDE SEQUENCE [LARGE SCALE GENOMIC DNA]</scope>
    <source>
        <strain>Tuebingen</strain>
    </source>
</reference>
<reference evidence="6" key="2">
    <citation type="submission" date="2008-04" db="EMBL/GenBank/DDBJ databases">
        <authorList>
            <consortium name="NIH - Zebrafish Gene Collection (ZGC) project"/>
        </authorList>
    </citation>
    <scope>NUCLEOTIDE SEQUENCE [LARGE SCALE MRNA]</scope>
    <source>
        <tissue evidence="6">Eye</tissue>
    </source>
</reference>
<reference evidence="5" key="3">
    <citation type="journal article" date="2014" name="Hum. Mol. Genet.">
        <title>Regulation of a novel isoform of receptor expression enhancing protein REEP6 in rod photoreceptors by bZIP transcription factor NRL.</title>
        <authorList>
            <person name="Hao H."/>
            <person name="Veleri S."/>
            <person name="Sun B."/>
            <person name="Kim D.S."/>
            <person name="Keeley P.W."/>
            <person name="Kim J.W."/>
            <person name="Yang H.J."/>
            <person name="Yadav S.P."/>
            <person name="Manjunath S.H."/>
            <person name="Sood R."/>
            <person name="Liu P."/>
            <person name="Reese B.E."/>
            <person name="Swaroop A."/>
        </authorList>
    </citation>
    <scope>FUNCTION</scope>
    <scope>DISRUPTION PHENOTYPE</scope>
</reference>
<proteinExistence type="evidence at transcript level"/>
<organism>
    <name type="scientific">Danio rerio</name>
    <name type="common">Zebrafish</name>
    <name type="synonym">Brachydanio rerio</name>
    <dbReference type="NCBI Taxonomy" id="7955"/>
    <lineage>
        <taxon>Eukaryota</taxon>
        <taxon>Metazoa</taxon>
        <taxon>Chordata</taxon>
        <taxon>Craniata</taxon>
        <taxon>Vertebrata</taxon>
        <taxon>Euteleostomi</taxon>
        <taxon>Actinopterygii</taxon>
        <taxon>Neopterygii</taxon>
        <taxon>Teleostei</taxon>
        <taxon>Ostariophysi</taxon>
        <taxon>Cypriniformes</taxon>
        <taxon>Danionidae</taxon>
        <taxon>Danioninae</taxon>
        <taxon>Danio</taxon>
    </lineage>
</organism>
<comment type="function">
    <text evidence="1 4">Required correct function and survival of retinal photoreceptors (PubMed:24691551). Required for retinal development (By similarity). In rod photoreceptors, facilitates stability and/or trafficking of guanylate cyclases and is required to maintain endoplasmic reticulum and mitochondrial homeostasis (By similarity). May play a role in clathrin-coated intracellular vesicle trafficking of proteins from the endoplasmic reticulum to the retinal rod plasma membrane (By similarity).</text>
</comment>
<comment type="subcellular location">
    <subcellularLocation>
        <location evidence="1">Endoplasmic reticulum membrane</location>
        <topology evidence="2">Multi-pass membrane protein</topology>
    </subcellularLocation>
    <subcellularLocation>
        <location evidence="1">Cytoplasmic vesicle</location>
        <location evidence="1">Clathrin-coated vesicle membrane</location>
        <topology evidence="2">Multi-pass membrane protein</topology>
    </subcellularLocation>
</comment>
<comment type="disruption phenotype">
    <text evidence="4">Morpholino knockdown causes abnormal retinal lamination in the developing eye.</text>
</comment>
<comment type="similarity">
    <text evidence="5">Belongs to the DP1 family.</text>
</comment>